<protein>
    <recommendedName>
        <fullName evidence="1">Translation initiation factor IF-1</fullName>
    </recommendedName>
</protein>
<reference key="1">
    <citation type="journal article" date="2011" name="Stand. Genomic Sci.">
        <title>Complete genome sequence of Rhodospirillum rubrum type strain (S1).</title>
        <authorList>
            <person name="Munk A.C."/>
            <person name="Copeland A."/>
            <person name="Lucas S."/>
            <person name="Lapidus A."/>
            <person name="Del Rio T.G."/>
            <person name="Barry K."/>
            <person name="Detter J.C."/>
            <person name="Hammon N."/>
            <person name="Israni S."/>
            <person name="Pitluck S."/>
            <person name="Brettin T."/>
            <person name="Bruce D."/>
            <person name="Han C."/>
            <person name="Tapia R."/>
            <person name="Gilna P."/>
            <person name="Schmutz J."/>
            <person name="Larimer F."/>
            <person name="Land M."/>
            <person name="Kyrpides N.C."/>
            <person name="Mavromatis K."/>
            <person name="Richardson P."/>
            <person name="Rohde M."/>
            <person name="Goeker M."/>
            <person name="Klenk H.P."/>
            <person name="Zhang Y."/>
            <person name="Roberts G.P."/>
            <person name="Reslewic S."/>
            <person name="Schwartz D.C."/>
        </authorList>
    </citation>
    <scope>NUCLEOTIDE SEQUENCE [LARGE SCALE GENOMIC DNA]</scope>
    <source>
        <strain>ATCC 11170 / ATH 1.1.1 / DSM 467 / LMG 4362 / NCIMB 8255 / S1</strain>
    </source>
</reference>
<proteinExistence type="inferred from homology"/>
<dbReference type="EMBL" id="CP000230">
    <property type="protein sequence ID" value="ABC21466.1"/>
    <property type="molecule type" value="Genomic_DNA"/>
</dbReference>
<dbReference type="RefSeq" id="WP_011388420.1">
    <property type="nucleotide sequence ID" value="NC_007643.1"/>
</dbReference>
<dbReference type="RefSeq" id="YP_425753.1">
    <property type="nucleotide sequence ID" value="NC_007643.1"/>
</dbReference>
<dbReference type="SMR" id="Q2RWM9"/>
<dbReference type="STRING" id="269796.Rru_A0662"/>
<dbReference type="EnsemblBacteria" id="ABC21466">
    <property type="protein sequence ID" value="ABC21466"/>
    <property type="gene ID" value="Rru_A0662"/>
</dbReference>
<dbReference type="KEGG" id="rru:Rru_A0662"/>
<dbReference type="PATRIC" id="fig|269796.9.peg.718"/>
<dbReference type="eggNOG" id="COG0361">
    <property type="taxonomic scope" value="Bacteria"/>
</dbReference>
<dbReference type="HOGENOM" id="CLU_151267_4_1_5"/>
<dbReference type="PhylomeDB" id="Q2RWM9"/>
<dbReference type="Proteomes" id="UP000001929">
    <property type="component" value="Chromosome"/>
</dbReference>
<dbReference type="GO" id="GO:0005829">
    <property type="term" value="C:cytosol"/>
    <property type="evidence" value="ECO:0007669"/>
    <property type="project" value="TreeGrafter"/>
</dbReference>
<dbReference type="GO" id="GO:0043022">
    <property type="term" value="F:ribosome binding"/>
    <property type="evidence" value="ECO:0007669"/>
    <property type="project" value="UniProtKB-UniRule"/>
</dbReference>
<dbReference type="GO" id="GO:0019843">
    <property type="term" value="F:rRNA binding"/>
    <property type="evidence" value="ECO:0007669"/>
    <property type="project" value="UniProtKB-UniRule"/>
</dbReference>
<dbReference type="GO" id="GO:0003743">
    <property type="term" value="F:translation initiation factor activity"/>
    <property type="evidence" value="ECO:0007669"/>
    <property type="project" value="UniProtKB-UniRule"/>
</dbReference>
<dbReference type="CDD" id="cd04451">
    <property type="entry name" value="S1_IF1"/>
    <property type="match status" value="1"/>
</dbReference>
<dbReference type="FunFam" id="2.40.50.140:FF:000002">
    <property type="entry name" value="Translation initiation factor IF-1"/>
    <property type="match status" value="1"/>
</dbReference>
<dbReference type="Gene3D" id="2.40.50.140">
    <property type="entry name" value="Nucleic acid-binding proteins"/>
    <property type="match status" value="1"/>
</dbReference>
<dbReference type="HAMAP" id="MF_00075">
    <property type="entry name" value="IF_1"/>
    <property type="match status" value="1"/>
</dbReference>
<dbReference type="InterPro" id="IPR012340">
    <property type="entry name" value="NA-bd_OB-fold"/>
</dbReference>
<dbReference type="InterPro" id="IPR006196">
    <property type="entry name" value="RNA-binding_domain_S1_IF1"/>
</dbReference>
<dbReference type="InterPro" id="IPR004368">
    <property type="entry name" value="TIF_IF1"/>
</dbReference>
<dbReference type="NCBIfam" id="TIGR00008">
    <property type="entry name" value="infA"/>
    <property type="match status" value="1"/>
</dbReference>
<dbReference type="PANTHER" id="PTHR33370">
    <property type="entry name" value="TRANSLATION INITIATION FACTOR IF-1, CHLOROPLASTIC"/>
    <property type="match status" value="1"/>
</dbReference>
<dbReference type="PANTHER" id="PTHR33370:SF1">
    <property type="entry name" value="TRANSLATION INITIATION FACTOR IF-1, CHLOROPLASTIC"/>
    <property type="match status" value="1"/>
</dbReference>
<dbReference type="Pfam" id="PF01176">
    <property type="entry name" value="eIF-1a"/>
    <property type="match status" value="1"/>
</dbReference>
<dbReference type="SUPFAM" id="SSF50249">
    <property type="entry name" value="Nucleic acid-binding proteins"/>
    <property type="match status" value="1"/>
</dbReference>
<dbReference type="PROSITE" id="PS50832">
    <property type="entry name" value="S1_IF1_TYPE"/>
    <property type="match status" value="1"/>
</dbReference>
<comment type="function">
    <text evidence="1">One of the essential components for the initiation of protein synthesis. Stabilizes the binding of IF-2 and IF-3 on the 30S subunit to which N-formylmethionyl-tRNA(fMet) subsequently binds. Helps modulate mRNA selection, yielding the 30S pre-initiation complex (PIC). Upon addition of the 50S ribosomal subunit IF-1, IF-2 and IF-3 are released leaving the mature 70S translation initiation complex.</text>
</comment>
<comment type="subunit">
    <text evidence="1">Component of the 30S ribosomal translation pre-initiation complex which assembles on the 30S ribosome in the order IF-2 and IF-3, IF-1 and N-formylmethionyl-tRNA(fMet); mRNA recruitment can occur at any time during PIC assembly.</text>
</comment>
<comment type="subcellular location">
    <subcellularLocation>
        <location evidence="1">Cytoplasm</location>
    </subcellularLocation>
</comment>
<comment type="similarity">
    <text evidence="1">Belongs to the IF-1 family.</text>
</comment>
<feature type="chain" id="PRO_0000263860" description="Translation initiation factor IF-1">
    <location>
        <begin position="1"/>
        <end position="95"/>
    </location>
</feature>
<feature type="domain" description="S1-like" evidence="1">
    <location>
        <begin position="1"/>
        <end position="72"/>
    </location>
</feature>
<feature type="region of interest" description="Disordered" evidence="2">
    <location>
        <begin position="70"/>
        <end position="95"/>
    </location>
</feature>
<feature type="compositionally biased region" description="Pro residues" evidence="2">
    <location>
        <begin position="86"/>
        <end position="95"/>
    </location>
</feature>
<keyword id="KW-0963">Cytoplasm</keyword>
<keyword id="KW-0396">Initiation factor</keyword>
<keyword id="KW-0648">Protein biosynthesis</keyword>
<keyword id="KW-1185">Reference proteome</keyword>
<keyword id="KW-0694">RNA-binding</keyword>
<keyword id="KW-0699">rRNA-binding</keyword>
<accession>Q2RWM9</accession>
<sequence length="95" mass="10741">MAKEELIEMDGVVTDVLPDSRFKVQLDNGHEVMAYSAGKMKKHRIRIMVGDRVDMEMTPYDLTKARITYRHKVGGPPGPVTGGGNRPPPRQPRRR</sequence>
<gene>
    <name evidence="1" type="primary">infA</name>
    <name type="ordered locus">Rru_A0662</name>
</gene>
<name>IF1_RHORT</name>
<evidence type="ECO:0000255" key="1">
    <source>
        <dbReference type="HAMAP-Rule" id="MF_00075"/>
    </source>
</evidence>
<evidence type="ECO:0000256" key="2">
    <source>
        <dbReference type="SAM" id="MobiDB-lite"/>
    </source>
</evidence>
<organism>
    <name type="scientific">Rhodospirillum rubrum (strain ATCC 11170 / ATH 1.1.1 / DSM 467 / LMG 4362 / NCIMB 8255 / S1)</name>
    <dbReference type="NCBI Taxonomy" id="269796"/>
    <lineage>
        <taxon>Bacteria</taxon>
        <taxon>Pseudomonadati</taxon>
        <taxon>Pseudomonadota</taxon>
        <taxon>Alphaproteobacteria</taxon>
        <taxon>Rhodospirillales</taxon>
        <taxon>Rhodospirillaceae</taxon>
        <taxon>Rhodospirillum</taxon>
    </lineage>
</organism>